<protein>
    <recommendedName>
        <fullName>Ras-related protein Rab-6A</fullName>
        <shortName>Rab-6</shortName>
        <ecNumber evidence="2">3.6.5.2</ecNumber>
    </recommendedName>
</protein>
<proteinExistence type="evidence at protein level"/>
<name>RAB6A_MOUSE</name>
<accession>P35279</accession>
<accession>Q542M6</accession>
<accession>Q8R2Z7</accession>
<accession>Q8VEE5</accession>
<accession>Q9JJD4</accession>
<comment type="function">
    <text evidence="2">The small GTPases Rab are key regulators of intracellular membrane trafficking, from the formation of transport vesicles to their fusion with membranes. Rabs cycle between an inactive GDP-bound form and an active GTP-bound form that is able to recruit to membranes different sets of downstream effectors directly responsible for vesicle formation, movement, tethering and fusion. RAB6A acts as a regulator of COPI-independent retrograde transport from the Golgi apparatus towards the endoplasmic reticulum (ER). Has a low GTPase activity. Recruits VPS13B to the Golgi membrane. Plays a role in neuron projection development.</text>
</comment>
<comment type="catalytic activity">
    <reaction evidence="2">
        <text>GTP + H2O = GDP + phosphate + H(+)</text>
        <dbReference type="Rhea" id="RHEA:19669"/>
        <dbReference type="ChEBI" id="CHEBI:15377"/>
        <dbReference type="ChEBI" id="CHEBI:15378"/>
        <dbReference type="ChEBI" id="CHEBI:37565"/>
        <dbReference type="ChEBI" id="CHEBI:43474"/>
        <dbReference type="ChEBI" id="CHEBI:58189"/>
        <dbReference type="EC" id="3.6.5.2"/>
    </reaction>
    <physiologicalReaction direction="left-to-right" evidence="2">
        <dbReference type="Rhea" id="RHEA:19670"/>
    </physiologicalReaction>
</comment>
<comment type="cofactor">
    <cofactor evidence="2">
        <name>Mg(2+)</name>
        <dbReference type="ChEBI" id="CHEBI:18420"/>
    </cofactor>
</comment>
<comment type="activity regulation">
    <text evidence="2">Regulated by guanine nucleotide exchange factors (GEFs) which promote the exchange of bound GDP for free GTP. Regulated by GTPase activating proteins (GAPs) which increase the GTP hydrolysis activity. Inhibited by GDP dissociation inhibitors (GDIs).</text>
</comment>
<comment type="subunit">
    <text evidence="2 3 4 5 6">Interacts with BICDL1; leads to its accumulation in the pericentrosomal region (PubMed:20360680). Interacts with SCYL1BP1 (PubMed:18997784). Interacts with VSP52 (By similarity). Interacts with RABGAP1 (By similarity). Interacts with GCC2 (via its GRIP domain) (By similarity). Interacts with RAB6IP1 (via its RUN 1 domain) (By similarity). Interacts with TMF1 (By similarity). Interacts with CIMAP3 (PubMed:20643351). Interacts (GTP-bound) with APBA1/MINT1 isoform 3, also called Mint1_826, but not with isoform 1 (PubMed:23737971). Interacts with RIC1; the interaction is direct with a preference for RAB6A-GDP (By similarity). Interacts with RGP1; the interaction is direct with a preference for RAB6A-GDP (By similarity).</text>
</comment>
<comment type="subunit">
    <molecule>Isoform 1</molecule>
    <text evidence="2">Interacts (GTP-bound) with DYNLRB1; the interaction is direct (By similarity). Interacts with BICD1 (By similarity). Interacts with BICD2; the interaction is direct (By similarity). Interacts (GTP-bound) with VPS13B (By similarity).</text>
</comment>
<comment type="subunit">
    <molecule>Isoform 2</molecule>
    <text evidence="2">Interacts with BICD1 (By similarity). Interacts (GDP-bound) with DYNLRB1; the interaction is direct (By similarity). Interacts (GTP-bound) with VPS13B (By similarity).</text>
</comment>
<comment type="interaction">
    <interactant intactId="EBI-444674">
        <id>P35279</id>
    </interactant>
    <interactant intactId="EBI-642984">
        <id>Q921C5</id>
        <label>Bicd2</label>
    </interactant>
    <organismsDiffer>false</organismsDiffer>
    <experiments>3</experiments>
</comment>
<comment type="interaction">
    <interactant intactId="EBI-444674">
        <id>P35279</id>
    </interactant>
    <interactant intactId="EBI-7893170">
        <id>A0JNT9</id>
        <label>Bicdl1</label>
    </interactant>
    <organismsDiffer>false</organismsDiffer>
    <experiments>6</experiments>
</comment>
<comment type="interaction">
    <interactant intactId="EBI-444674">
        <id>P35279</id>
    </interactant>
    <interactant intactId="EBI-2939487">
        <id>Q8TDW5</id>
        <label>SYTL5</label>
    </interactant>
    <organismsDiffer>true</organismsDiffer>
    <experiments>2</experiments>
</comment>
<comment type="subcellular location">
    <subcellularLocation>
        <location evidence="7">Golgi apparatus membrane</location>
        <topology evidence="2">Lipid-anchor</topology>
    </subcellularLocation>
    <subcellularLocation>
        <location evidence="7">Cytoplasmic vesicle</location>
        <location evidence="7">Secretory vesicle</location>
        <location evidence="7">Acrosome membrane</location>
        <topology evidence="11">Peripheral membrane protein</topology>
    </subcellularLocation>
    <text evidence="2">BICD2 facilitates its targeting to Golgi apparatus membrane.</text>
</comment>
<comment type="alternative products">
    <event type="alternative splicing"/>
    <isoform>
        <id>P35279-1</id>
        <name>1</name>
        <name>Rab-6a</name>
        <sequence type="displayed"/>
    </isoform>
    <isoform>
        <id>P35279-2</id>
        <name>2</name>
        <name>Rab-6a'</name>
        <name>Rab6C</name>
        <sequence type="described" ref="VSP_005528"/>
    </isoform>
</comment>
<comment type="domain">
    <text evidence="2">Switch 1, switch 2 and the interswitch regions are characteristic of Rab GTPases and mediate the interactions with Rab downstream effectors. The switch regions undergo conformational changes upon nucleotide binding which drives interaction with specific sets of effector proteins, with most effectors only binding to GTP-bound Rab.</text>
</comment>
<comment type="PTM">
    <text evidence="2">Prenylated.</text>
</comment>
<comment type="similarity">
    <text evidence="11">Belongs to the small GTPase superfamily. Rab family.</text>
</comment>
<sequence length="208" mass="23590">MSAGGDFGNPLRKFKLVFLGEQSVGKTSLITRFMYDSFDNTYQATIGIDFLSKTMYLEDRTVRLQLWDTAGQERFRSLIPSYIRDSTVAVVVYDITNVNSFQQTTKWIDDVRTERGSDVIIMLVGNKTDLADKRQVSIEEGERKAKELNVMFIETSAKAGYNVKQLFRRVAAALPGMESTQDRSREDMIDIKLEKPQEQPVNEGGCSC</sequence>
<feature type="initiator methionine" description="Removed" evidence="2">
    <location>
        <position position="1"/>
    </location>
</feature>
<feature type="chain" id="PRO_0000121113" description="Ras-related protein Rab-6A">
    <location>
        <begin position="2"/>
        <end position="208"/>
    </location>
</feature>
<feature type="short sequence motif" description="Switch 1" evidence="2">
    <location>
        <begin position="32"/>
        <end position="50"/>
    </location>
</feature>
<feature type="short sequence motif" description="Switch 2" evidence="2">
    <location>
        <begin position="69"/>
        <end position="88"/>
    </location>
</feature>
<feature type="binding site" evidence="2">
    <location>
        <position position="23"/>
    </location>
    <ligand>
        <name>GTP</name>
        <dbReference type="ChEBI" id="CHEBI:37565"/>
    </ligand>
</feature>
<feature type="binding site" evidence="2">
    <location>
        <position position="24"/>
    </location>
    <ligand>
        <name>GTP</name>
        <dbReference type="ChEBI" id="CHEBI:37565"/>
    </ligand>
</feature>
<feature type="binding site" evidence="2">
    <location>
        <position position="25"/>
    </location>
    <ligand>
        <name>GTP</name>
        <dbReference type="ChEBI" id="CHEBI:37565"/>
    </ligand>
</feature>
<feature type="binding site" evidence="2">
    <location>
        <position position="26"/>
    </location>
    <ligand>
        <name>GTP</name>
        <dbReference type="ChEBI" id="CHEBI:37565"/>
    </ligand>
</feature>
<feature type="binding site" evidence="2">
    <location>
        <position position="27"/>
    </location>
    <ligand>
        <name>GTP</name>
        <dbReference type="ChEBI" id="CHEBI:37565"/>
    </ligand>
</feature>
<feature type="binding site" evidence="2">
    <location>
        <position position="27"/>
    </location>
    <ligand>
        <name>Mg(2+)</name>
        <dbReference type="ChEBI" id="CHEBI:18420"/>
    </ligand>
</feature>
<feature type="binding site" evidence="2">
    <location>
        <position position="28"/>
    </location>
    <ligand>
        <name>GTP</name>
        <dbReference type="ChEBI" id="CHEBI:37565"/>
    </ligand>
</feature>
<feature type="binding site" evidence="2">
    <location>
        <position position="39"/>
    </location>
    <ligand>
        <name>GTP</name>
        <dbReference type="ChEBI" id="CHEBI:37565"/>
    </ligand>
</feature>
<feature type="binding site" evidence="2">
    <location>
        <position position="40"/>
    </location>
    <ligand>
        <name>GTP</name>
        <dbReference type="ChEBI" id="CHEBI:37565"/>
    </ligand>
</feature>
<feature type="binding site" evidence="2">
    <location>
        <position position="42"/>
    </location>
    <ligand>
        <name>GTP</name>
        <dbReference type="ChEBI" id="CHEBI:37565"/>
    </ligand>
</feature>
<feature type="binding site" evidence="2">
    <location>
        <position position="45"/>
    </location>
    <ligand>
        <name>GTP</name>
        <dbReference type="ChEBI" id="CHEBI:37565"/>
    </ligand>
</feature>
<feature type="binding site" evidence="2">
    <location>
        <position position="45"/>
    </location>
    <ligand>
        <name>Mg(2+)</name>
        <dbReference type="ChEBI" id="CHEBI:18420"/>
    </ligand>
</feature>
<feature type="binding site" evidence="2">
    <location>
        <position position="68"/>
    </location>
    <ligand>
        <name>Mg(2+)</name>
        <dbReference type="ChEBI" id="CHEBI:18420"/>
    </ligand>
</feature>
<feature type="binding site" evidence="2">
    <location>
        <position position="71"/>
    </location>
    <ligand>
        <name>GTP</name>
        <dbReference type="ChEBI" id="CHEBI:37565"/>
    </ligand>
</feature>
<feature type="binding site" evidence="2">
    <location>
        <position position="126"/>
    </location>
    <ligand>
        <name>GTP</name>
        <dbReference type="ChEBI" id="CHEBI:37565"/>
    </ligand>
</feature>
<feature type="binding site" evidence="2">
    <location>
        <position position="127"/>
    </location>
    <ligand>
        <name>GTP</name>
        <dbReference type="ChEBI" id="CHEBI:37565"/>
    </ligand>
</feature>
<feature type="binding site" evidence="2">
    <location>
        <position position="129"/>
    </location>
    <ligand>
        <name>GTP</name>
        <dbReference type="ChEBI" id="CHEBI:37565"/>
    </ligand>
</feature>
<feature type="binding site" evidence="2">
    <location>
        <position position="156"/>
    </location>
    <ligand>
        <name>GTP</name>
        <dbReference type="ChEBI" id="CHEBI:37565"/>
    </ligand>
</feature>
<feature type="binding site" evidence="2">
    <location>
        <position position="157"/>
    </location>
    <ligand>
        <name>GTP</name>
        <dbReference type="ChEBI" id="CHEBI:37565"/>
    </ligand>
</feature>
<feature type="binding site" evidence="2">
    <location>
        <position position="158"/>
    </location>
    <ligand>
        <name>GTP</name>
        <dbReference type="ChEBI" id="CHEBI:37565"/>
    </ligand>
</feature>
<feature type="modified residue" description="N-acetylserine" evidence="2">
    <location>
        <position position="2"/>
    </location>
</feature>
<feature type="modified residue" description="Phosphoserine" evidence="13">
    <location>
        <position position="184"/>
    </location>
</feature>
<feature type="modified residue" description="Cysteine methyl ester" evidence="1">
    <location>
        <position position="208"/>
    </location>
</feature>
<feature type="lipid moiety-binding region" description="S-geranylgeranyl cysteine" evidence="1">
    <location>
        <position position="206"/>
    </location>
</feature>
<feature type="lipid moiety-binding region" description="S-geranylgeranyl cysteine" evidence="1">
    <location>
        <position position="208"/>
    </location>
</feature>
<feature type="splice variant" id="VSP_005528" description="In isoform 2." evidence="9 10">
    <original>VRLQLWDTAGQERFRSLIPSYIRDSTV</original>
    <variation>IRLQLWDTAGQERFRSLIPSYIRDSAA</variation>
    <location>
        <begin position="62"/>
        <end position="88"/>
    </location>
</feature>
<feature type="mutagenesis site" description="Loss of binding to rabkinesin-6." evidence="8">
    <original>Q</original>
    <variation>V</variation>
    <location>
        <position position="22"/>
    </location>
</feature>
<feature type="mutagenesis site" description="Loss of binding to rabkinesin-6; when associated with L-73." evidence="8">
    <original>T</original>
    <variation>N</variation>
    <location>
        <position position="27"/>
    </location>
</feature>
<feature type="mutagenesis site" description="Loss of binding to rabkinesin-6." evidence="8">
    <original>I</original>
    <variation>E</variation>
    <location>
        <position position="46"/>
    </location>
</feature>
<feature type="mutagenesis site" description="Loss of binding to rabkinesin-6; when associated with N-28." evidence="8">
    <original>Q</original>
    <variation>L</variation>
    <location>
        <position position="72"/>
    </location>
</feature>
<evidence type="ECO:0000250" key="1"/>
<evidence type="ECO:0000250" key="2">
    <source>
        <dbReference type="UniProtKB" id="P20340"/>
    </source>
</evidence>
<evidence type="ECO:0000269" key="3">
    <source>
    </source>
</evidence>
<evidence type="ECO:0000269" key="4">
    <source>
    </source>
</evidence>
<evidence type="ECO:0000269" key="5">
    <source>
    </source>
</evidence>
<evidence type="ECO:0000269" key="6">
    <source>
    </source>
</evidence>
<evidence type="ECO:0000269" key="7">
    <source>
    </source>
</evidence>
<evidence type="ECO:0000269" key="8">
    <source>
    </source>
</evidence>
<evidence type="ECO:0000303" key="9">
    <source>
    </source>
</evidence>
<evidence type="ECO:0000303" key="10">
    <source>
    </source>
</evidence>
<evidence type="ECO:0000305" key="11"/>
<evidence type="ECO:0000312" key="12">
    <source>
        <dbReference type="MGI" id="MGI:894313"/>
    </source>
</evidence>
<evidence type="ECO:0007744" key="13">
    <source>
    </source>
</evidence>
<dbReference type="EC" id="3.6.5.2" evidence="2"/>
<dbReference type="EMBL" id="AB041575">
    <property type="protein sequence ID" value="BAA95059.1"/>
    <property type="molecule type" value="mRNA"/>
</dbReference>
<dbReference type="EMBL" id="AK051246">
    <property type="protein sequence ID" value="BAC34572.1"/>
    <property type="molecule type" value="mRNA"/>
</dbReference>
<dbReference type="EMBL" id="AK083262">
    <property type="protein sequence ID" value="BAC38834.1"/>
    <property type="molecule type" value="mRNA"/>
</dbReference>
<dbReference type="EMBL" id="AK084131">
    <property type="protein sequence ID" value="BAC39121.1"/>
    <property type="molecule type" value="mRNA"/>
</dbReference>
<dbReference type="EMBL" id="AK160134">
    <property type="protein sequence ID" value="BAE35649.1"/>
    <property type="molecule type" value="mRNA"/>
</dbReference>
<dbReference type="EMBL" id="AK160866">
    <property type="protein sequence ID" value="BAE36058.1"/>
    <property type="molecule type" value="mRNA"/>
</dbReference>
<dbReference type="EMBL" id="AK169842">
    <property type="protein sequence ID" value="BAE41406.1"/>
    <property type="molecule type" value="mRNA"/>
</dbReference>
<dbReference type="EMBL" id="BC019118">
    <property type="protein sequence ID" value="AAH19118.1"/>
    <property type="molecule type" value="mRNA"/>
</dbReference>
<dbReference type="EMBL" id="BC026915">
    <property type="protein sequence ID" value="AAH26915.1"/>
    <property type="molecule type" value="mRNA"/>
</dbReference>
<dbReference type="EMBL" id="M79313">
    <property type="protein sequence ID" value="AAK14837.1"/>
    <property type="molecule type" value="mRNA"/>
</dbReference>
<dbReference type="CCDS" id="CCDS21503.1">
    <molecule id="P35279-1"/>
</dbReference>
<dbReference type="CCDS" id="CCDS52323.1">
    <molecule id="P35279-2"/>
</dbReference>
<dbReference type="PIR" id="A38883">
    <property type="entry name" value="A38883"/>
</dbReference>
<dbReference type="RefSeq" id="NP_001157135.1">
    <molecule id="P35279-2"/>
    <property type="nucleotide sequence ID" value="NM_001163663.2"/>
</dbReference>
<dbReference type="RefSeq" id="NP_077249.1">
    <molecule id="P35279-1"/>
    <property type="nucleotide sequence ID" value="NM_024287.5"/>
</dbReference>
<dbReference type="SMR" id="P35279"/>
<dbReference type="BioGRID" id="202550">
    <property type="interactions" value="16"/>
</dbReference>
<dbReference type="DIP" id="DIP-120N"/>
<dbReference type="FunCoup" id="P35279">
    <property type="interactions" value="3607"/>
</dbReference>
<dbReference type="IntAct" id="P35279">
    <property type="interactions" value="26"/>
</dbReference>
<dbReference type="MINT" id="P35279"/>
<dbReference type="STRING" id="10090.ENSMUSP00000032946"/>
<dbReference type="GlyGen" id="P35279">
    <property type="glycosylation" value="2 sites, 1 O-linked glycan (2 sites)"/>
</dbReference>
<dbReference type="iPTMnet" id="P35279"/>
<dbReference type="PhosphoSitePlus" id="P35279"/>
<dbReference type="SwissPalm" id="P35279"/>
<dbReference type="jPOST" id="P35279"/>
<dbReference type="PaxDb" id="10090-ENSMUSP00000032946"/>
<dbReference type="PeptideAtlas" id="P35279"/>
<dbReference type="ProteomicsDB" id="253150">
    <molecule id="P35279-1"/>
</dbReference>
<dbReference type="ProteomicsDB" id="253151">
    <molecule id="P35279-2"/>
</dbReference>
<dbReference type="Pumba" id="P35279"/>
<dbReference type="TopDownProteomics" id="P35279-1">
    <molecule id="P35279-1"/>
</dbReference>
<dbReference type="ABCD" id="P35279">
    <property type="antibodies" value="35 sequenced antibodies"/>
</dbReference>
<dbReference type="Antibodypedia" id="4093">
    <property type="antibodies" value="294 antibodies from 33 providers"/>
</dbReference>
<dbReference type="DNASU" id="19346"/>
<dbReference type="Ensembl" id="ENSMUST00000032946.10">
    <molecule id="P35279-1"/>
    <property type="protein sequence ID" value="ENSMUSP00000032946.4"/>
    <property type="gene ID" value="ENSMUSG00000030704.15"/>
</dbReference>
<dbReference type="Ensembl" id="ENSMUST00000098252.5">
    <molecule id="P35279-2"/>
    <property type="protein sequence ID" value="ENSMUSP00000095852.5"/>
    <property type="gene ID" value="ENSMUSG00000030704.15"/>
</dbReference>
<dbReference type="GeneID" id="19346"/>
<dbReference type="KEGG" id="mmu:19346"/>
<dbReference type="UCSC" id="uc009ini.2">
    <molecule id="P35279-1"/>
    <property type="organism name" value="mouse"/>
</dbReference>
<dbReference type="AGR" id="MGI:894313"/>
<dbReference type="CTD" id="5870"/>
<dbReference type="MGI" id="MGI:894313">
    <property type="gene designation" value="Rab6a"/>
</dbReference>
<dbReference type="VEuPathDB" id="HostDB:ENSMUSG00000030704"/>
<dbReference type="eggNOG" id="KOG0094">
    <property type="taxonomic scope" value="Eukaryota"/>
</dbReference>
<dbReference type="GeneTree" id="ENSGT00940000154769"/>
<dbReference type="HOGENOM" id="CLU_041217_10_2_1"/>
<dbReference type="InParanoid" id="P35279"/>
<dbReference type="OMA" id="PVSNDGC"/>
<dbReference type="OrthoDB" id="63533at2759"/>
<dbReference type="PhylomeDB" id="P35279"/>
<dbReference type="TreeFam" id="TF300803"/>
<dbReference type="Reactome" id="R-MMU-6798695">
    <property type="pathway name" value="Neutrophil degranulation"/>
</dbReference>
<dbReference type="Reactome" id="R-MMU-6811436">
    <property type="pathway name" value="COPI-independent Golgi-to-ER retrograde traffic"/>
</dbReference>
<dbReference type="Reactome" id="R-MMU-6811440">
    <property type="pathway name" value="Retrograde transport at the Trans-Golgi-Network"/>
</dbReference>
<dbReference type="Reactome" id="R-MMU-8854214">
    <property type="pathway name" value="TBC/RABGAPs"/>
</dbReference>
<dbReference type="Reactome" id="R-MMU-8873719">
    <property type="pathway name" value="RAB geranylgeranylation"/>
</dbReference>
<dbReference type="Reactome" id="R-MMU-8876198">
    <property type="pathway name" value="RAB GEFs exchange GTP for GDP on RABs"/>
</dbReference>
<dbReference type="BioGRID-ORCS" id="19346">
    <property type="hits" value="14 hits in 78 CRISPR screens"/>
</dbReference>
<dbReference type="CD-CODE" id="CE726F99">
    <property type="entry name" value="Postsynaptic density"/>
</dbReference>
<dbReference type="ChiTaRS" id="Rab6a">
    <property type="organism name" value="mouse"/>
</dbReference>
<dbReference type="PRO" id="PR:P35279"/>
<dbReference type="Proteomes" id="UP000000589">
    <property type="component" value="Chromosome 7"/>
</dbReference>
<dbReference type="RNAct" id="P35279">
    <property type="molecule type" value="protein"/>
</dbReference>
<dbReference type="Bgee" id="ENSMUSG00000030704">
    <property type="expression patterns" value="Expressed in primary motor cortex and 271 other cell types or tissues"/>
</dbReference>
<dbReference type="ExpressionAtlas" id="P35279">
    <property type="expression patterns" value="baseline and differential"/>
</dbReference>
<dbReference type="GO" id="GO:0002080">
    <property type="term" value="C:acrosomal membrane"/>
    <property type="evidence" value="ECO:0000314"/>
    <property type="project" value="UniProtKB"/>
</dbReference>
<dbReference type="GO" id="GO:0036064">
    <property type="term" value="C:ciliary basal body"/>
    <property type="evidence" value="ECO:0007669"/>
    <property type="project" value="Ensembl"/>
</dbReference>
<dbReference type="GO" id="GO:0005829">
    <property type="term" value="C:cytosol"/>
    <property type="evidence" value="ECO:0007669"/>
    <property type="project" value="Ensembl"/>
</dbReference>
<dbReference type="GO" id="GO:0070381">
    <property type="term" value="C:endosome to plasma membrane transport vesicle"/>
    <property type="evidence" value="ECO:0007669"/>
    <property type="project" value="Ensembl"/>
</dbReference>
<dbReference type="GO" id="GO:0005794">
    <property type="term" value="C:Golgi apparatus"/>
    <property type="evidence" value="ECO:0000314"/>
    <property type="project" value="UniProtKB"/>
</dbReference>
<dbReference type="GO" id="GO:0000139">
    <property type="term" value="C:Golgi membrane"/>
    <property type="evidence" value="ECO:0000250"/>
    <property type="project" value="UniProtKB"/>
</dbReference>
<dbReference type="GO" id="GO:0005654">
    <property type="term" value="C:nucleoplasm"/>
    <property type="evidence" value="ECO:0007669"/>
    <property type="project" value="Ensembl"/>
</dbReference>
<dbReference type="GO" id="GO:0005802">
    <property type="term" value="C:trans-Golgi network"/>
    <property type="evidence" value="ECO:0007669"/>
    <property type="project" value="Ensembl"/>
</dbReference>
<dbReference type="GO" id="GO:0005525">
    <property type="term" value="F:GTP binding"/>
    <property type="evidence" value="ECO:0000250"/>
    <property type="project" value="UniProtKB"/>
</dbReference>
<dbReference type="GO" id="GO:0003924">
    <property type="term" value="F:GTPase activity"/>
    <property type="evidence" value="ECO:0000250"/>
    <property type="project" value="UniProtKB"/>
</dbReference>
<dbReference type="GO" id="GO:0031489">
    <property type="term" value="F:myosin V binding"/>
    <property type="evidence" value="ECO:0007669"/>
    <property type="project" value="Ensembl"/>
</dbReference>
<dbReference type="GO" id="GO:0019904">
    <property type="term" value="F:protein domain specific binding"/>
    <property type="evidence" value="ECO:0007669"/>
    <property type="project" value="Ensembl"/>
</dbReference>
<dbReference type="GO" id="GO:0019882">
    <property type="term" value="P:antigen processing and presentation"/>
    <property type="evidence" value="ECO:0007669"/>
    <property type="project" value="Ensembl"/>
</dbReference>
<dbReference type="GO" id="GO:0034498">
    <property type="term" value="P:early endosome to Golgi transport"/>
    <property type="evidence" value="ECO:0007669"/>
    <property type="project" value="Ensembl"/>
</dbReference>
<dbReference type="GO" id="GO:0006886">
    <property type="term" value="P:intracellular protein transport"/>
    <property type="evidence" value="ECO:0000304"/>
    <property type="project" value="MGI"/>
</dbReference>
<dbReference type="GO" id="GO:0034067">
    <property type="term" value="P:protein localization to Golgi apparatus"/>
    <property type="evidence" value="ECO:0000250"/>
    <property type="project" value="UniProtKB"/>
</dbReference>
<dbReference type="GO" id="GO:1903292">
    <property type="term" value="P:protein localization to Golgi membrane"/>
    <property type="evidence" value="ECO:0000250"/>
    <property type="project" value="UniProtKB"/>
</dbReference>
<dbReference type="GO" id="GO:0006890">
    <property type="term" value="P:retrograde vesicle-mediated transport, Golgi to endoplasmic reticulum"/>
    <property type="evidence" value="ECO:0000250"/>
    <property type="project" value="UniProtKB"/>
</dbReference>
<dbReference type="CDD" id="cd01861">
    <property type="entry name" value="Rab6"/>
    <property type="match status" value="1"/>
</dbReference>
<dbReference type="FunFam" id="3.40.50.300:FF:000139">
    <property type="entry name" value="ras-related protein Rab-6A isoform X1"/>
    <property type="match status" value="1"/>
</dbReference>
<dbReference type="Gene3D" id="3.40.50.300">
    <property type="entry name" value="P-loop containing nucleotide triphosphate hydrolases"/>
    <property type="match status" value="1"/>
</dbReference>
<dbReference type="InterPro" id="IPR027417">
    <property type="entry name" value="P-loop_NTPase"/>
</dbReference>
<dbReference type="InterPro" id="IPR050227">
    <property type="entry name" value="Rab"/>
</dbReference>
<dbReference type="InterPro" id="IPR005225">
    <property type="entry name" value="Small_GTP-bd"/>
</dbReference>
<dbReference type="InterPro" id="IPR001806">
    <property type="entry name" value="Small_GTPase"/>
</dbReference>
<dbReference type="NCBIfam" id="TIGR00231">
    <property type="entry name" value="small_GTP"/>
    <property type="match status" value="1"/>
</dbReference>
<dbReference type="PANTHER" id="PTHR47977">
    <property type="entry name" value="RAS-RELATED PROTEIN RAB"/>
    <property type="match status" value="1"/>
</dbReference>
<dbReference type="Pfam" id="PF00071">
    <property type="entry name" value="Ras"/>
    <property type="match status" value="1"/>
</dbReference>
<dbReference type="PRINTS" id="PR00449">
    <property type="entry name" value="RASTRNSFRMNG"/>
</dbReference>
<dbReference type="SMART" id="SM00175">
    <property type="entry name" value="RAB"/>
    <property type="match status" value="1"/>
</dbReference>
<dbReference type="SMART" id="SM00176">
    <property type="entry name" value="RAN"/>
    <property type="match status" value="1"/>
</dbReference>
<dbReference type="SMART" id="SM00173">
    <property type="entry name" value="RAS"/>
    <property type="match status" value="1"/>
</dbReference>
<dbReference type="SMART" id="SM00174">
    <property type="entry name" value="RHO"/>
    <property type="match status" value="1"/>
</dbReference>
<dbReference type="SUPFAM" id="SSF52540">
    <property type="entry name" value="P-loop containing nucleoside triphosphate hydrolases"/>
    <property type="match status" value="1"/>
</dbReference>
<dbReference type="PROSITE" id="PS51419">
    <property type="entry name" value="RAB"/>
    <property type="match status" value="1"/>
</dbReference>
<gene>
    <name evidence="12" type="primary">Rab6a</name>
    <name type="synonym">Rab6</name>
    <name type="ORF">MNCb-1660</name>
</gene>
<keyword id="KW-0007">Acetylation</keyword>
<keyword id="KW-0025">Alternative splicing</keyword>
<keyword id="KW-0968">Cytoplasmic vesicle</keyword>
<keyword id="KW-0903">Direct protein sequencing</keyword>
<keyword id="KW-0931">ER-Golgi transport</keyword>
<keyword id="KW-0333">Golgi apparatus</keyword>
<keyword id="KW-0342">GTP-binding</keyword>
<keyword id="KW-0378">Hydrolase</keyword>
<keyword id="KW-0449">Lipoprotein</keyword>
<keyword id="KW-0460">Magnesium</keyword>
<keyword id="KW-0472">Membrane</keyword>
<keyword id="KW-0479">Metal-binding</keyword>
<keyword id="KW-0488">Methylation</keyword>
<keyword id="KW-0547">Nucleotide-binding</keyword>
<keyword id="KW-0597">Phosphoprotein</keyword>
<keyword id="KW-0636">Prenylation</keyword>
<keyword id="KW-0653">Protein transport</keyword>
<keyword id="KW-1185">Reference proteome</keyword>
<keyword id="KW-0813">Transport</keyword>
<reference key="1">
    <citation type="submission" date="2000-04" db="EMBL/GenBank/DDBJ databases">
        <title>Isolation of full-length cDNA clones from mouse brain cDNA library made by oligo-capping method.</title>
        <authorList>
            <person name="Osada N."/>
            <person name="Kusuda J."/>
            <person name="Tanuma R."/>
            <person name="Ito A."/>
            <person name="Hirata M."/>
            <person name="Sugano S."/>
            <person name="Hashimoto K."/>
        </authorList>
    </citation>
    <scope>NUCLEOTIDE SEQUENCE [LARGE SCALE MRNA] (ISOFORM 1)</scope>
    <source>
        <strain>C57BL/6J</strain>
        <tissue>Brain</tissue>
    </source>
</reference>
<reference key="2">
    <citation type="journal article" date="2005" name="Science">
        <title>The transcriptional landscape of the mammalian genome.</title>
        <authorList>
            <person name="Carninci P."/>
            <person name="Kasukawa T."/>
            <person name="Katayama S."/>
            <person name="Gough J."/>
            <person name="Frith M.C."/>
            <person name="Maeda N."/>
            <person name="Oyama R."/>
            <person name="Ravasi T."/>
            <person name="Lenhard B."/>
            <person name="Wells C."/>
            <person name="Kodzius R."/>
            <person name="Shimokawa K."/>
            <person name="Bajic V.B."/>
            <person name="Brenner S.E."/>
            <person name="Batalov S."/>
            <person name="Forrest A.R."/>
            <person name="Zavolan M."/>
            <person name="Davis M.J."/>
            <person name="Wilming L.G."/>
            <person name="Aidinis V."/>
            <person name="Allen J.E."/>
            <person name="Ambesi-Impiombato A."/>
            <person name="Apweiler R."/>
            <person name="Aturaliya R.N."/>
            <person name="Bailey T.L."/>
            <person name="Bansal M."/>
            <person name="Baxter L."/>
            <person name="Beisel K.W."/>
            <person name="Bersano T."/>
            <person name="Bono H."/>
            <person name="Chalk A.M."/>
            <person name="Chiu K.P."/>
            <person name="Choudhary V."/>
            <person name="Christoffels A."/>
            <person name="Clutterbuck D.R."/>
            <person name="Crowe M.L."/>
            <person name="Dalla E."/>
            <person name="Dalrymple B.P."/>
            <person name="de Bono B."/>
            <person name="Della Gatta G."/>
            <person name="di Bernardo D."/>
            <person name="Down T."/>
            <person name="Engstrom P."/>
            <person name="Fagiolini M."/>
            <person name="Faulkner G."/>
            <person name="Fletcher C.F."/>
            <person name="Fukushima T."/>
            <person name="Furuno M."/>
            <person name="Futaki S."/>
            <person name="Gariboldi M."/>
            <person name="Georgii-Hemming P."/>
            <person name="Gingeras T.R."/>
            <person name="Gojobori T."/>
            <person name="Green R.E."/>
            <person name="Gustincich S."/>
            <person name="Harbers M."/>
            <person name="Hayashi Y."/>
            <person name="Hensch T.K."/>
            <person name="Hirokawa N."/>
            <person name="Hill D."/>
            <person name="Huminiecki L."/>
            <person name="Iacono M."/>
            <person name="Ikeo K."/>
            <person name="Iwama A."/>
            <person name="Ishikawa T."/>
            <person name="Jakt M."/>
            <person name="Kanapin A."/>
            <person name="Katoh M."/>
            <person name="Kawasawa Y."/>
            <person name="Kelso J."/>
            <person name="Kitamura H."/>
            <person name="Kitano H."/>
            <person name="Kollias G."/>
            <person name="Krishnan S.P."/>
            <person name="Kruger A."/>
            <person name="Kummerfeld S.K."/>
            <person name="Kurochkin I.V."/>
            <person name="Lareau L.F."/>
            <person name="Lazarevic D."/>
            <person name="Lipovich L."/>
            <person name="Liu J."/>
            <person name="Liuni S."/>
            <person name="McWilliam S."/>
            <person name="Madan Babu M."/>
            <person name="Madera M."/>
            <person name="Marchionni L."/>
            <person name="Matsuda H."/>
            <person name="Matsuzawa S."/>
            <person name="Miki H."/>
            <person name="Mignone F."/>
            <person name="Miyake S."/>
            <person name="Morris K."/>
            <person name="Mottagui-Tabar S."/>
            <person name="Mulder N."/>
            <person name="Nakano N."/>
            <person name="Nakauchi H."/>
            <person name="Ng P."/>
            <person name="Nilsson R."/>
            <person name="Nishiguchi S."/>
            <person name="Nishikawa S."/>
            <person name="Nori F."/>
            <person name="Ohara O."/>
            <person name="Okazaki Y."/>
            <person name="Orlando V."/>
            <person name="Pang K.C."/>
            <person name="Pavan W.J."/>
            <person name="Pavesi G."/>
            <person name="Pesole G."/>
            <person name="Petrovsky N."/>
            <person name="Piazza S."/>
            <person name="Reed J."/>
            <person name="Reid J.F."/>
            <person name="Ring B.Z."/>
            <person name="Ringwald M."/>
            <person name="Rost B."/>
            <person name="Ruan Y."/>
            <person name="Salzberg S.L."/>
            <person name="Sandelin A."/>
            <person name="Schneider C."/>
            <person name="Schoenbach C."/>
            <person name="Sekiguchi K."/>
            <person name="Semple C.A."/>
            <person name="Seno S."/>
            <person name="Sessa L."/>
            <person name="Sheng Y."/>
            <person name="Shibata Y."/>
            <person name="Shimada H."/>
            <person name="Shimada K."/>
            <person name="Silva D."/>
            <person name="Sinclair B."/>
            <person name="Sperling S."/>
            <person name="Stupka E."/>
            <person name="Sugiura K."/>
            <person name="Sultana R."/>
            <person name="Takenaka Y."/>
            <person name="Taki K."/>
            <person name="Tammoja K."/>
            <person name="Tan S.L."/>
            <person name="Tang S."/>
            <person name="Taylor M.S."/>
            <person name="Tegner J."/>
            <person name="Teichmann S.A."/>
            <person name="Ueda H.R."/>
            <person name="van Nimwegen E."/>
            <person name="Verardo R."/>
            <person name="Wei C.L."/>
            <person name="Yagi K."/>
            <person name="Yamanishi H."/>
            <person name="Zabarovsky E."/>
            <person name="Zhu S."/>
            <person name="Zimmer A."/>
            <person name="Hide W."/>
            <person name="Bult C."/>
            <person name="Grimmond S.M."/>
            <person name="Teasdale R.D."/>
            <person name="Liu E.T."/>
            <person name="Brusic V."/>
            <person name="Quackenbush J."/>
            <person name="Wahlestedt C."/>
            <person name="Mattick J.S."/>
            <person name="Hume D.A."/>
            <person name="Kai C."/>
            <person name="Sasaki D."/>
            <person name="Tomaru Y."/>
            <person name="Fukuda S."/>
            <person name="Kanamori-Katayama M."/>
            <person name="Suzuki M."/>
            <person name="Aoki J."/>
            <person name="Arakawa T."/>
            <person name="Iida J."/>
            <person name="Imamura K."/>
            <person name="Itoh M."/>
            <person name="Kato T."/>
            <person name="Kawaji H."/>
            <person name="Kawagashira N."/>
            <person name="Kawashima T."/>
            <person name="Kojima M."/>
            <person name="Kondo S."/>
            <person name="Konno H."/>
            <person name="Nakano K."/>
            <person name="Ninomiya N."/>
            <person name="Nishio T."/>
            <person name="Okada M."/>
            <person name="Plessy C."/>
            <person name="Shibata K."/>
            <person name="Shiraki T."/>
            <person name="Suzuki S."/>
            <person name="Tagami M."/>
            <person name="Waki K."/>
            <person name="Watahiki A."/>
            <person name="Okamura-Oho Y."/>
            <person name="Suzuki H."/>
            <person name="Kawai J."/>
            <person name="Hayashizaki Y."/>
        </authorList>
    </citation>
    <scope>NUCLEOTIDE SEQUENCE [LARGE SCALE MRNA] (ISOFORM 1)</scope>
    <source>
        <strain>C57BL/6J</strain>
        <strain>NOD</strain>
        <tissue>Hippocampus</tissue>
        <tissue>Spinal ganglion</tissue>
    </source>
</reference>
<reference key="3">
    <citation type="journal article" date="2004" name="Genome Res.">
        <title>The status, quality, and expansion of the NIH full-length cDNA project: the Mammalian Gene Collection (MGC).</title>
        <authorList>
            <consortium name="The MGC Project Team"/>
        </authorList>
    </citation>
    <scope>NUCLEOTIDE SEQUENCE [LARGE SCALE MRNA] (ISOFORMS 1 AND 2)</scope>
</reference>
<reference key="4">
    <citation type="journal article" date="1992" name="Gene">
        <title>The complexity of the Rab and Rho GTP-binding protein subfamilies revealed by a PCR cloning approach.</title>
        <authorList>
            <person name="Chavrier P."/>
            <person name="Simons K."/>
            <person name="Zerial M."/>
        </authorList>
    </citation>
    <scope>NUCLEOTIDE SEQUENCE [MRNA] OF 1-73 (ISOFORM 2)</scope>
    <source>
        <tissue>Kidney</tissue>
    </source>
</reference>
<reference key="5">
    <citation type="submission" date="2007-04" db="UniProtKB">
        <authorList>
            <person name="Lubec G."/>
            <person name="Kang S.U."/>
        </authorList>
    </citation>
    <scope>PROTEIN SEQUENCE OF 64-74 AND 144-158</scope>
    <scope>IDENTIFICATION BY MASS SPECTROMETRY</scope>
    <source>
        <strain>C57BL/6J</strain>
        <tissue>Brain</tissue>
    </source>
</reference>
<reference key="6">
    <citation type="journal article" date="1998" name="Science">
        <title>Interaction of a Golgi-associated kinesin-like protein with Rab6.</title>
        <authorList>
            <person name="Echard A."/>
            <person name="Jollivet F."/>
            <person name="Martinez O."/>
            <person name="Lacapere J.-J."/>
            <person name="Rousselet A."/>
            <person name="Janoueix-Lerosey I."/>
            <person name="Goud B."/>
        </authorList>
    </citation>
    <scope>MUTAGENESIS</scope>
</reference>
<reference key="7">
    <citation type="journal article" date="2008" name="Nat. Genet.">
        <title>Gerodermia osteodysplastica is caused by mutations in SCYL1BP1, a Rab-6 interacting golgin.</title>
        <authorList>
            <person name="Hennies H.C."/>
            <person name="Kornak U."/>
            <person name="Zhang H."/>
            <person name="Egerer J."/>
            <person name="Zhang X."/>
            <person name="Seifert W."/>
            <person name="Kuhnisch J."/>
            <person name="Budde B."/>
            <person name="Naetebus M."/>
            <person name="Brancati F."/>
            <person name="Wilcox W.R."/>
            <person name="Mueller D."/>
            <person name="Kaplan P.B."/>
            <person name="Rajab A."/>
            <person name="Zampino G."/>
            <person name="Fodale V."/>
            <person name="Dallapiccola B."/>
            <person name="Newman W."/>
            <person name="Metcalfe K."/>
            <person name="Clayton-Smith J."/>
            <person name="Tassabehji M."/>
            <person name="Steinmann B."/>
            <person name="Barr F.A."/>
            <person name="Nuernberg P."/>
            <person name="Wieacker P."/>
            <person name="Mundlos S."/>
        </authorList>
    </citation>
    <scope>INTERACTION WITH SCYL1BP1</scope>
</reference>
<reference key="8">
    <citation type="journal article" date="2010" name="Cell">
        <title>A tissue-specific atlas of mouse protein phosphorylation and expression.</title>
        <authorList>
            <person name="Huttlin E.L."/>
            <person name="Jedrychowski M.P."/>
            <person name="Elias J.E."/>
            <person name="Goswami T."/>
            <person name="Rad R."/>
            <person name="Beausoleil S.A."/>
            <person name="Villen J."/>
            <person name="Haas W."/>
            <person name="Sowa M.E."/>
            <person name="Gygi S.P."/>
        </authorList>
    </citation>
    <scope>PHOSPHORYLATION [LARGE SCALE ANALYSIS] AT SER-184</scope>
    <scope>IDENTIFICATION BY MASS SPECTROMETRY [LARGE SCALE ANALYSIS]</scope>
    <source>
        <tissue>Brain</tissue>
        <tissue>Brown adipose tissue</tissue>
        <tissue>Heart</tissue>
        <tissue>Kidney</tissue>
        <tissue>Liver</tissue>
        <tissue>Lung</tissue>
        <tissue>Pancreas</tissue>
        <tissue>Spleen</tissue>
        <tissue>Testis</tissue>
    </source>
</reference>
<reference key="9">
    <citation type="journal article" date="2010" name="Dev. Cell">
        <title>Pitchfork regulates primary cilia disassembly and left-right asymmetry.</title>
        <authorList>
            <person name="Kinzel D."/>
            <person name="Boldt K."/>
            <person name="Davis E.E."/>
            <person name="Burtscher I."/>
            <person name="Trumbach D."/>
            <person name="Diplas B."/>
            <person name="Attie-Bitach T."/>
            <person name="Wurst W."/>
            <person name="Katsanis N."/>
            <person name="Ueffing M."/>
            <person name="Lickert H."/>
        </authorList>
    </citation>
    <scope>INTERACTION WITH CIMAP3</scope>
</reference>
<reference key="10">
    <citation type="journal article" date="2010" name="EMBO J.">
        <title>Pericentrosomal targeting of Rab6 secretory vesicles by Bicaudal-D-related protein 1 (BICDR-1) regulates neuritogenesis.</title>
        <authorList>
            <person name="Schlager M.A."/>
            <person name="Kapitein L.C."/>
            <person name="Grigoriev I."/>
            <person name="Burzynski G.M."/>
            <person name="Wulf P.S."/>
            <person name="Keijzer N."/>
            <person name="de Graaff E."/>
            <person name="Fukuda M."/>
            <person name="Shepherd I.T."/>
            <person name="Akhmanova A."/>
            <person name="Hoogenraad C.C."/>
        </authorList>
    </citation>
    <scope>INTERACTION WITH BICDL1</scope>
</reference>
<reference key="11">
    <citation type="journal article" date="2013" name="PLoS ONE">
        <title>A new Mint1 isoform, but not the conventional Mint1, interacts with the small GTPase Rab6.</title>
        <authorList>
            <person name="Thyrock A."/>
            <person name="Ossendorf E."/>
            <person name="Stehling M."/>
            <person name="Kail M."/>
            <person name="Kurtz T."/>
            <person name="Pohlentz G."/>
            <person name="Waschbusch D."/>
            <person name="Eggert S."/>
            <person name="Formstecher E."/>
            <person name="Muthing J."/>
            <person name="Dreisewerd K."/>
            <person name="Kins S."/>
            <person name="Goud B."/>
            <person name="Barnekow A."/>
        </authorList>
    </citation>
    <scope>INTERACTION WITH APBA1</scope>
</reference>
<reference key="12">
    <citation type="journal article" date="2020" name="Cell. Mol. Life Sci.">
        <title>Vps13b is required for acrosome biogenesis through functions in Golgi dynamic and membrane trafficking.</title>
        <authorList>
            <person name="Da Costa R."/>
            <person name="Bordessoules M."/>
            <person name="Guilleman M."/>
            <person name="Carmignac V."/>
            <person name="Lhussiez V."/>
            <person name="Courot H."/>
            <person name="Bataille A."/>
            <person name="Chlemaire A."/>
            <person name="Bruno C."/>
            <person name="Fauque P."/>
            <person name="Thauvin C."/>
            <person name="Faivre L."/>
            <person name="Duplomb L."/>
        </authorList>
    </citation>
    <scope>SUBCELLULAR LOCATION</scope>
</reference>
<organism>
    <name type="scientific">Mus musculus</name>
    <name type="common">Mouse</name>
    <dbReference type="NCBI Taxonomy" id="10090"/>
    <lineage>
        <taxon>Eukaryota</taxon>
        <taxon>Metazoa</taxon>
        <taxon>Chordata</taxon>
        <taxon>Craniata</taxon>
        <taxon>Vertebrata</taxon>
        <taxon>Euteleostomi</taxon>
        <taxon>Mammalia</taxon>
        <taxon>Eutheria</taxon>
        <taxon>Euarchontoglires</taxon>
        <taxon>Glires</taxon>
        <taxon>Rodentia</taxon>
        <taxon>Myomorpha</taxon>
        <taxon>Muroidea</taxon>
        <taxon>Muridae</taxon>
        <taxon>Murinae</taxon>
        <taxon>Mus</taxon>
        <taxon>Mus</taxon>
    </lineage>
</organism>